<organism>
    <name type="scientific">Mesomycoplasma hyopneumoniae (strain 232)</name>
    <name type="common">Mycoplasma hyopneumoniae</name>
    <dbReference type="NCBI Taxonomy" id="295358"/>
    <lineage>
        <taxon>Bacteria</taxon>
        <taxon>Bacillati</taxon>
        <taxon>Mycoplasmatota</taxon>
        <taxon>Mycoplasmoidales</taxon>
        <taxon>Metamycoplasmataceae</taxon>
        <taxon>Mesomycoplasma</taxon>
    </lineage>
</organism>
<reference key="1">
    <citation type="journal article" date="2004" name="J. Bacteriol.">
        <title>The genome sequence of Mycoplasma hyopneumoniae strain 232, the agent of swine mycoplasmosis.</title>
        <authorList>
            <person name="Minion F.C."/>
            <person name="Lefkowitz E.J."/>
            <person name="Madsen M.L."/>
            <person name="Cleary B.J."/>
            <person name="Swartzell S.M."/>
            <person name="Mahairas G.G."/>
        </authorList>
    </citation>
    <scope>NUCLEOTIDE SEQUENCE [LARGE SCALE GENOMIC DNA]</scope>
    <source>
        <strain>232</strain>
    </source>
</reference>
<protein>
    <recommendedName>
        <fullName evidence="1">Phenylalanine--tRNA ligase beta subunit</fullName>
        <ecNumber evidence="1">6.1.1.20</ecNumber>
    </recommendedName>
    <alternativeName>
        <fullName evidence="1">Phenylalanyl-tRNA synthetase beta subunit</fullName>
        <shortName evidence="1">PheRS</shortName>
    </alternativeName>
</protein>
<proteinExistence type="inferred from homology"/>
<dbReference type="EC" id="6.1.1.20" evidence="1"/>
<dbReference type="EMBL" id="AE017332">
    <property type="protein sequence ID" value="AAV27712.1"/>
    <property type="molecule type" value="Genomic_DNA"/>
</dbReference>
<dbReference type="RefSeq" id="WP_011205943.1">
    <property type="nucleotide sequence ID" value="NC_006360.1"/>
</dbReference>
<dbReference type="SMR" id="Q601U6"/>
<dbReference type="KEGG" id="mhy:mhp105"/>
<dbReference type="eggNOG" id="COG0072">
    <property type="taxonomic scope" value="Bacteria"/>
</dbReference>
<dbReference type="eggNOG" id="COG0073">
    <property type="taxonomic scope" value="Bacteria"/>
</dbReference>
<dbReference type="HOGENOM" id="CLU_016891_2_0_14"/>
<dbReference type="PhylomeDB" id="Q601U6"/>
<dbReference type="Proteomes" id="UP000006822">
    <property type="component" value="Chromosome"/>
</dbReference>
<dbReference type="GO" id="GO:0005737">
    <property type="term" value="C:cytoplasm"/>
    <property type="evidence" value="ECO:0007669"/>
    <property type="project" value="UniProtKB-SubCell"/>
</dbReference>
<dbReference type="GO" id="GO:0005524">
    <property type="term" value="F:ATP binding"/>
    <property type="evidence" value="ECO:0007669"/>
    <property type="project" value="UniProtKB-UniRule"/>
</dbReference>
<dbReference type="GO" id="GO:0000287">
    <property type="term" value="F:magnesium ion binding"/>
    <property type="evidence" value="ECO:0007669"/>
    <property type="project" value="UniProtKB-UniRule"/>
</dbReference>
<dbReference type="GO" id="GO:0004826">
    <property type="term" value="F:phenylalanine-tRNA ligase activity"/>
    <property type="evidence" value="ECO:0007669"/>
    <property type="project" value="UniProtKB-UniRule"/>
</dbReference>
<dbReference type="GO" id="GO:0000049">
    <property type="term" value="F:tRNA binding"/>
    <property type="evidence" value="ECO:0007669"/>
    <property type="project" value="UniProtKB-KW"/>
</dbReference>
<dbReference type="GO" id="GO:0006432">
    <property type="term" value="P:phenylalanyl-tRNA aminoacylation"/>
    <property type="evidence" value="ECO:0007669"/>
    <property type="project" value="UniProtKB-UniRule"/>
</dbReference>
<dbReference type="CDD" id="cd02796">
    <property type="entry name" value="tRNA_bind_bactPheRS"/>
    <property type="match status" value="1"/>
</dbReference>
<dbReference type="Gene3D" id="3.30.56.10">
    <property type="match status" value="2"/>
</dbReference>
<dbReference type="Gene3D" id="3.30.930.10">
    <property type="entry name" value="Bira Bifunctional Protein, Domain 2"/>
    <property type="match status" value="1"/>
</dbReference>
<dbReference type="Gene3D" id="2.40.50.140">
    <property type="entry name" value="Nucleic acid-binding proteins"/>
    <property type="match status" value="1"/>
</dbReference>
<dbReference type="HAMAP" id="MF_00283">
    <property type="entry name" value="Phe_tRNA_synth_beta1"/>
    <property type="match status" value="1"/>
</dbReference>
<dbReference type="InterPro" id="IPR045864">
    <property type="entry name" value="aa-tRNA-synth_II/BPL/LPL"/>
</dbReference>
<dbReference type="InterPro" id="IPR009061">
    <property type="entry name" value="DNA-bd_dom_put_sf"/>
</dbReference>
<dbReference type="InterPro" id="IPR012340">
    <property type="entry name" value="NA-bd_OB-fold"/>
</dbReference>
<dbReference type="InterPro" id="IPR004532">
    <property type="entry name" value="Phe-tRNA-ligase_IIc_bsu_bact"/>
</dbReference>
<dbReference type="InterPro" id="IPR041616">
    <property type="entry name" value="PheRS_beta_core"/>
</dbReference>
<dbReference type="InterPro" id="IPR002547">
    <property type="entry name" value="tRNA-bd_dom"/>
</dbReference>
<dbReference type="InterPro" id="IPR033714">
    <property type="entry name" value="tRNA_bind_bactPheRS"/>
</dbReference>
<dbReference type="InterPro" id="IPR005147">
    <property type="entry name" value="tRNA_synthase_B5-dom"/>
</dbReference>
<dbReference type="NCBIfam" id="NF001879">
    <property type="entry name" value="PRK00629.5-1"/>
    <property type="match status" value="1"/>
</dbReference>
<dbReference type="NCBIfam" id="NF001882">
    <property type="entry name" value="PRK00629.5-4"/>
    <property type="match status" value="1"/>
</dbReference>
<dbReference type="Pfam" id="PF03484">
    <property type="entry name" value="B5"/>
    <property type="match status" value="1"/>
</dbReference>
<dbReference type="Pfam" id="PF01588">
    <property type="entry name" value="tRNA_bind"/>
    <property type="match status" value="1"/>
</dbReference>
<dbReference type="Pfam" id="PF17759">
    <property type="entry name" value="tRNA_synthFbeta"/>
    <property type="match status" value="1"/>
</dbReference>
<dbReference type="SMART" id="SM00874">
    <property type="entry name" value="B5"/>
    <property type="match status" value="1"/>
</dbReference>
<dbReference type="SUPFAM" id="SSF55681">
    <property type="entry name" value="Class II aaRS and biotin synthetases"/>
    <property type="match status" value="1"/>
</dbReference>
<dbReference type="SUPFAM" id="SSF50249">
    <property type="entry name" value="Nucleic acid-binding proteins"/>
    <property type="match status" value="1"/>
</dbReference>
<dbReference type="SUPFAM" id="SSF46955">
    <property type="entry name" value="Putative DNA-binding domain"/>
    <property type="match status" value="1"/>
</dbReference>
<dbReference type="PROSITE" id="PS51483">
    <property type="entry name" value="B5"/>
    <property type="match status" value="1"/>
</dbReference>
<dbReference type="PROSITE" id="PS50886">
    <property type="entry name" value="TRBD"/>
    <property type="match status" value="1"/>
</dbReference>
<keyword id="KW-0030">Aminoacyl-tRNA synthetase</keyword>
<keyword id="KW-0067">ATP-binding</keyword>
<keyword id="KW-0963">Cytoplasm</keyword>
<keyword id="KW-0436">Ligase</keyword>
<keyword id="KW-0460">Magnesium</keyword>
<keyword id="KW-0479">Metal-binding</keyword>
<keyword id="KW-0547">Nucleotide-binding</keyword>
<keyword id="KW-0648">Protein biosynthesis</keyword>
<keyword id="KW-0694">RNA-binding</keyword>
<keyword id="KW-0820">tRNA-binding</keyword>
<accession>Q601U6</accession>
<sequence>MLFSLRRLKKLANLEAFSDQKVIDSLINLGFEVDQITKLNEISGIKFGQILEIRKNPEADNLWICKVQFADKIREIQTAAKNVIENKQVLAFIPGSKSGNTTFLAKKLRGHISEGMLISAVELGFNKHLLNSELDQGVLVFDPIFDLESNPLKVLELDDLILDIKLLWNRPDGNSYLVLANELAAFFKTDFSLINKEISGKFYSELKIINKTDSKIFALEIQKLPKLALVDIFLLLKSEVKIGNLAQNFSNFILIYTGQPSYCLQLEKHQQKVELIEQKVKIKYEPDTISSYHFLNQEKKPLLIPEFSDQIIMENNSFFLIMPKFNLLKVKQIKQFLKKNSLKLTQLGKNYNYGTTFIALSFLNFFLEDQKIDFSWPINFDKSLISKKTFLDLNYNELKEILGLELSQEDISKTNLILEKIGYNFDNTSFSPPFYRVDIEFFADYAADFLRFYGLEKLKDCKLEQVKSKIPNPDLEPVKLKTLGYYETNSFLLISKEEDFNPLELKSQDLLTFPSQEHTKIRYSLAWQLAKITKYNQKRKITEINLYEKGSIAGWNHSLALASTIYTSEDLKKHLKILYNYDFDFLPADSEFLNPEKSQFIYLDNVLVGWLGQVAEKYNYENVNFLEILLSKVEKIPKKEGGKIKFRPYDNSQLKYRDITLSLPMKDIPDPYLKVIQKIPEIFSVKLINYVIINNQQKITYRITGPDQVCAEIDKFYK</sequence>
<comment type="catalytic activity">
    <reaction evidence="1">
        <text>tRNA(Phe) + L-phenylalanine + ATP = L-phenylalanyl-tRNA(Phe) + AMP + diphosphate + H(+)</text>
        <dbReference type="Rhea" id="RHEA:19413"/>
        <dbReference type="Rhea" id="RHEA-COMP:9668"/>
        <dbReference type="Rhea" id="RHEA-COMP:9699"/>
        <dbReference type="ChEBI" id="CHEBI:15378"/>
        <dbReference type="ChEBI" id="CHEBI:30616"/>
        <dbReference type="ChEBI" id="CHEBI:33019"/>
        <dbReference type="ChEBI" id="CHEBI:58095"/>
        <dbReference type="ChEBI" id="CHEBI:78442"/>
        <dbReference type="ChEBI" id="CHEBI:78531"/>
        <dbReference type="ChEBI" id="CHEBI:456215"/>
        <dbReference type="EC" id="6.1.1.20"/>
    </reaction>
</comment>
<comment type="cofactor">
    <cofactor evidence="1">
        <name>Mg(2+)</name>
        <dbReference type="ChEBI" id="CHEBI:18420"/>
    </cofactor>
    <text evidence="1">Binds 2 magnesium ions per tetramer.</text>
</comment>
<comment type="subunit">
    <text evidence="1">Tetramer of two alpha and two beta subunits.</text>
</comment>
<comment type="subcellular location">
    <subcellularLocation>
        <location evidence="1">Cytoplasm</location>
    </subcellularLocation>
</comment>
<comment type="similarity">
    <text evidence="1">Belongs to the phenylalanyl-tRNA synthetase beta subunit family. Type 1 subfamily.</text>
</comment>
<comment type="caution">
    <text evidence="2">Lacks the conserved glutamate residue in position 447 that binds magnesium; it is replaced by an alanine residue.</text>
</comment>
<evidence type="ECO:0000255" key="1">
    <source>
        <dbReference type="HAMAP-Rule" id="MF_00283"/>
    </source>
</evidence>
<evidence type="ECO:0000305" key="2"/>
<feature type="chain" id="PRO_0000232807" description="Phenylalanine--tRNA ligase beta subunit">
    <location>
        <begin position="1"/>
        <end position="718"/>
    </location>
</feature>
<feature type="domain" description="tRNA-binding" evidence="1">
    <location>
        <begin position="39"/>
        <end position="153"/>
    </location>
</feature>
<feature type="domain" description="B5" evidence="1">
    <location>
        <begin position="386"/>
        <end position="460"/>
    </location>
</feature>
<feature type="binding site" evidence="1">
    <location>
        <position position="438"/>
    </location>
    <ligand>
        <name>Mg(2+)</name>
        <dbReference type="ChEBI" id="CHEBI:18420"/>
        <note>shared with alpha subunit</note>
    </ligand>
</feature>
<feature type="binding site" evidence="1">
    <location>
        <position position="444"/>
    </location>
    <ligand>
        <name>Mg(2+)</name>
        <dbReference type="ChEBI" id="CHEBI:18420"/>
        <note>shared with alpha subunit</note>
    </ligand>
</feature>
<feature type="binding site" evidence="1">
    <location>
        <position position="448"/>
    </location>
    <ligand>
        <name>Mg(2+)</name>
        <dbReference type="ChEBI" id="CHEBI:18420"/>
        <note>shared with alpha subunit</note>
    </ligand>
</feature>
<gene>
    <name evidence="1" type="primary">pheT</name>
    <name type="ordered locus">mhp105</name>
</gene>
<name>SYFB_MESH2</name>